<name>ACHE_BOVIN</name>
<accession>P02715</accession>
<accession>Q547R5</accession>
<organism>
    <name type="scientific">Bos taurus</name>
    <name type="common">Bovine</name>
    <dbReference type="NCBI Taxonomy" id="9913"/>
    <lineage>
        <taxon>Eukaryota</taxon>
        <taxon>Metazoa</taxon>
        <taxon>Chordata</taxon>
        <taxon>Craniata</taxon>
        <taxon>Vertebrata</taxon>
        <taxon>Euteleostomi</taxon>
        <taxon>Mammalia</taxon>
        <taxon>Eutheria</taxon>
        <taxon>Laurasiatheria</taxon>
        <taxon>Artiodactyla</taxon>
        <taxon>Ruminantia</taxon>
        <taxon>Pecora</taxon>
        <taxon>Bovidae</taxon>
        <taxon>Bovinae</taxon>
        <taxon>Bos</taxon>
    </lineage>
</organism>
<evidence type="ECO:0000250" key="1"/>
<evidence type="ECO:0000255" key="2"/>
<evidence type="ECO:0000269" key="3">
    <source>
    </source>
</evidence>
<evidence type="ECO:0000305" key="4"/>
<evidence type="ECO:0007829" key="5">
    <source>
        <dbReference type="PDB" id="9AVV"/>
    </source>
</evidence>
<protein>
    <recommendedName>
        <fullName>Acetylcholine receptor subunit epsilon</fullName>
    </recommendedName>
</protein>
<keyword id="KW-0002">3D-structure</keyword>
<keyword id="KW-1003">Cell membrane</keyword>
<keyword id="KW-1015">Disulfide bond</keyword>
<keyword id="KW-0325">Glycoprotein</keyword>
<keyword id="KW-0407">Ion channel</keyword>
<keyword id="KW-0406">Ion transport</keyword>
<keyword id="KW-1071">Ligand-gated ion channel</keyword>
<keyword id="KW-0472">Membrane</keyword>
<keyword id="KW-0628">Postsynaptic cell membrane</keyword>
<keyword id="KW-0675">Receptor</keyword>
<keyword id="KW-1185">Reference proteome</keyword>
<keyword id="KW-0732">Signal</keyword>
<keyword id="KW-0770">Synapse</keyword>
<keyword id="KW-0812">Transmembrane</keyword>
<keyword id="KW-1133">Transmembrane helix</keyword>
<keyword id="KW-0813">Transport</keyword>
<dbReference type="EMBL" id="X02597">
    <property type="protein sequence ID" value="CAA26442.1"/>
    <property type="molecule type" value="mRNA"/>
</dbReference>
<dbReference type="EMBL" id="AF457659">
    <property type="protein sequence ID" value="AAN76988.1"/>
    <property type="molecule type" value="Genomic_DNA"/>
</dbReference>
<dbReference type="EMBL" id="AF457656">
    <property type="protein sequence ID" value="AAN76988.1"/>
    <property type="status" value="JOINED"/>
    <property type="molecule type" value="Genomic_DNA"/>
</dbReference>
<dbReference type="EMBL" id="AF457657">
    <property type="protein sequence ID" value="AAN76988.1"/>
    <property type="status" value="JOINED"/>
    <property type="molecule type" value="Genomic_DNA"/>
</dbReference>
<dbReference type="EMBL" id="AF457658">
    <property type="protein sequence ID" value="AAN76988.1"/>
    <property type="status" value="JOINED"/>
    <property type="molecule type" value="Genomic_DNA"/>
</dbReference>
<dbReference type="PIR" id="A03174">
    <property type="entry name" value="ACBOE"/>
</dbReference>
<dbReference type="RefSeq" id="NP_776697.1">
    <property type="nucleotide sequence ID" value="NM_174272.2"/>
</dbReference>
<dbReference type="PDB" id="9AVV">
    <property type="method" value="EM"/>
    <property type="resolution" value="2.09 A"/>
    <property type="chains" value="B=21-491"/>
</dbReference>
<dbReference type="PDB" id="9AWJ">
    <property type="method" value="EM"/>
    <property type="resolution" value="2.45 A"/>
    <property type="chains" value="B=21-491"/>
</dbReference>
<dbReference type="PDBsum" id="9AVV"/>
<dbReference type="PDBsum" id="9AWJ"/>
<dbReference type="EMDB" id="EMD-43924"/>
<dbReference type="EMDB" id="EMD-43925"/>
<dbReference type="SMR" id="P02715"/>
<dbReference type="CORUM" id="P02715"/>
<dbReference type="FunCoup" id="P02715">
    <property type="interactions" value="27"/>
</dbReference>
<dbReference type="STRING" id="9913.ENSBTAP00000074296"/>
<dbReference type="GlyCosmos" id="P02715">
    <property type="glycosylation" value="2 sites, No reported glycans"/>
</dbReference>
<dbReference type="GlyGen" id="P02715">
    <property type="glycosylation" value="2 sites"/>
</dbReference>
<dbReference type="PaxDb" id="9913-ENSBTAP00000042804"/>
<dbReference type="GeneID" id="281688"/>
<dbReference type="KEGG" id="bta:281688"/>
<dbReference type="CTD" id="1145"/>
<dbReference type="VEuPathDB" id="HostDB:ENSBTAG00000004908"/>
<dbReference type="eggNOG" id="KOG3645">
    <property type="taxonomic scope" value="Eukaryota"/>
</dbReference>
<dbReference type="HOGENOM" id="CLU_018074_1_4_1"/>
<dbReference type="InParanoid" id="P02715"/>
<dbReference type="OrthoDB" id="5975154at2759"/>
<dbReference type="TreeFam" id="TF315605"/>
<dbReference type="Reactome" id="R-BTA-629587">
    <property type="pathway name" value="Highly sodium permeable postsynaptic acetylcholine nicotinic receptors"/>
</dbReference>
<dbReference type="Proteomes" id="UP000009136">
    <property type="component" value="Chromosome 19"/>
</dbReference>
<dbReference type="Bgee" id="ENSBTAG00000004908">
    <property type="expression patterns" value="Expressed in longissimus thoracis muscle and 104 other cell types or tissues"/>
</dbReference>
<dbReference type="GO" id="GO:0005892">
    <property type="term" value="C:acetylcholine-gated channel complex"/>
    <property type="evidence" value="ECO:0000318"/>
    <property type="project" value="GO_Central"/>
</dbReference>
<dbReference type="GO" id="GO:0031594">
    <property type="term" value="C:neuromuscular junction"/>
    <property type="evidence" value="ECO:0000314"/>
    <property type="project" value="SynGO"/>
</dbReference>
<dbReference type="GO" id="GO:0043005">
    <property type="term" value="C:neuron projection"/>
    <property type="evidence" value="ECO:0000318"/>
    <property type="project" value="GO_Central"/>
</dbReference>
<dbReference type="GO" id="GO:0005886">
    <property type="term" value="C:plasma membrane"/>
    <property type="evidence" value="ECO:0000318"/>
    <property type="project" value="GO_Central"/>
</dbReference>
<dbReference type="GO" id="GO:0045211">
    <property type="term" value="C:postsynaptic membrane"/>
    <property type="evidence" value="ECO:0007669"/>
    <property type="project" value="UniProtKB-SubCell"/>
</dbReference>
<dbReference type="GO" id="GO:0045202">
    <property type="term" value="C:synapse"/>
    <property type="evidence" value="ECO:0000318"/>
    <property type="project" value="GO_Central"/>
</dbReference>
<dbReference type="GO" id="GO:0015464">
    <property type="term" value="F:acetylcholine receptor activity"/>
    <property type="evidence" value="ECO:0000318"/>
    <property type="project" value="GO_Central"/>
</dbReference>
<dbReference type="GO" id="GO:0022848">
    <property type="term" value="F:acetylcholine-gated monoatomic cation-selective channel activity"/>
    <property type="evidence" value="ECO:0000318"/>
    <property type="project" value="GO_Central"/>
</dbReference>
<dbReference type="GO" id="GO:1904315">
    <property type="term" value="F:transmitter-gated monoatomic ion channel activity involved in regulation of postsynaptic membrane potential"/>
    <property type="evidence" value="ECO:0000314"/>
    <property type="project" value="SynGO"/>
</dbReference>
<dbReference type="GO" id="GO:0095500">
    <property type="term" value="P:acetylcholine receptor signaling pathway"/>
    <property type="evidence" value="ECO:0000318"/>
    <property type="project" value="GO_Central"/>
</dbReference>
<dbReference type="GO" id="GO:0007268">
    <property type="term" value="P:chemical synaptic transmission"/>
    <property type="evidence" value="ECO:0000318"/>
    <property type="project" value="GO_Central"/>
</dbReference>
<dbReference type="GO" id="GO:0051899">
    <property type="term" value="P:membrane depolarization"/>
    <property type="evidence" value="ECO:0000318"/>
    <property type="project" value="GO_Central"/>
</dbReference>
<dbReference type="GO" id="GO:0034220">
    <property type="term" value="P:monoatomic ion transmembrane transport"/>
    <property type="evidence" value="ECO:0000318"/>
    <property type="project" value="GO_Central"/>
</dbReference>
<dbReference type="CDD" id="cd19030">
    <property type="entry name" value="LGIC_ECD_nAChR_E"/>
    <property type="match status" value="1"/>
</dbReference>
<dbReference type="CDD" id="cd19064">
    <property type="entry name" value="LGIC_TM_nAChR"/>
    <property type="match status" value="1"/>
</dbReference>
<dbReference type="FunFam" id="1.20.58.390:FF:000048">
    <property type="entry name" value="Cholinergic receptor nicotinic epsilon subunit"/>
    <property type="match status" value="1"/>
</dbReference>
<dbReference type="FunFam" id="1.20.58.390:FF:000010">
    <property type="entry name" value="Nicotinic acetylcholine receptor subunit epsilon"/>
    <property type="match status" value="1"/>
</dbReference>
<dbReference type="FunFam" id="2.70.170.10:FF:000012">
    <property type="entry name" value="Nicotinic acetylcholine receptor subunit gamma"/>
    <property type="match status" value="1"/>
</dbReference>
<dbReference type="Gene3D" id="2.70.170.10">
    <property type="entry name" value="Neurotransmitter-gated ion-channel ligand-binding domain"/>
    <property type="match status" value="1"/>
</dbReference>
<dbReference type="Gene3D" id="1.20.58.390">
    <property type="entry name" value="Neurotransmitter-gated ion-channel transmembrane domain"/>
    <property type="match status" value="2"/>
</dbReference>
<dbReference type="InterPro" id="IPR006202">
    <property type="entry name" value="Neur_chan_lig-bd"/>
</dbReference>
<dbReference type="InterPro" id="IPR036734">
    <property type="entry name" value="Neur_chan_lig-bd_sf"/>
</dbReference>
<dbReference type="InterPro" id="IPR006201">
    <property type="entry name" value="Neur_channel"/>
</dbReference>
<dbReference type="InterPro" id="IPR036719">
    <property type="entry name" value="Neuro-gated_channel_TM_sf"/>
</dbReference>
<dbReference type="InterPro" id="IPR038050">
    <property type="entry name" value="Neuro_actylchol_rec"/>
</dbReference>
<dbReference type="InterPro" id="IPR006029">
    <property type="entry name" value="Neurotrans-gated_channel_TM"/>
</dbReference>
<dbReference type="InterPro" id="IPR018000">
    <property type="entry name" value="Neurotransmitter_ion_chnl_CS"/>
</dbReference>
<dbReference type="InterPro" id="IPR002394">
    <property type="entry name" value="Nicotinic_acetylcholine_rcpt"/>
</dbReference>
<dbReference type="PANTHER" id="PTHR18945">
    <property type="entry name" value="NEUROTRANSMITTER GATED ION CHANNEL"/>
    <property type="match status" value="1"/>
</dbReference>
<dbReference type="Pfam" id="PF02931">
    <property type="entry name" value="Neur_chan_LBD"/>
    <property type="match status" value="1"/>
</dbReference>
<dbReference type="Pfam" id="PF02932">
    <property type="entry name" value="Neur_chan_memb"/>
    <property type="match status" value="1"/>
</dbReference>
<dbReference type="PRINTS" id="PR00254">
    <property type="entry name" value="NICOTINICR"/>
</dbReference>
<dbReference type="PRINTS" id="PR00252">
    <property type="entry name" value="NRIONCHANNEL"/>
</dbReference>
<dbReference type="SUPFAM" id="SSF90112">
    <property type="entry name" value="Neurotransmitter-gated ion-channel transmembrane pore"/>
    <property type="match status" value="1"/>
</dbReference>
<dbReference type="SUPFAM" id="SSF63712">
    <property type="entry name" value="Nicotinic receptor ligand binding domain-like"/>
    <property type="match status" value="1"/>
</dbReference>
<dbReference type="PROSITE" id="PS00236">
    <property type="entry name" value="NEUROTR_ION_CHANNEL"/>
    <property type="match status" value="1"/>
</dbReference>
<sequence>MAGALLCALLLLQLLGRGEGKNEELRLYHYLFDTYDPGRRPVQEPEDTVTISLKVTLTNLISLNEKEETLTTSVWIGIDWQDYRLNYSKGDFGGVETLRVPSELVWLPEIVLENNIDGQFGVAYEANVLVSEGGYLSWLPPAIYRSTCAVEVTYFPFDWQNCSLVFRSQTYNAEEVEFVFAVDDEGKTISKIDIDTEAYTENGEWAIDFCPGVIRRHDGDSAGGPGETDVIYSLIIRRKPLFYVINIIVPCVLISGLVLLAYFLPAQAGGQKCTVSINVLLAQTVFLFLIAQKTPETSLSVPLLGRYLIFVMVVATLIVMNCVIVLNVSLRTPTTHAMSPRLRYVLLELLPQLLGSGAPPEIPRAASPPRRASSLGLLLRAEELILKKPRSELVFEQQRHRHGTWTATLCQNLGAAAPEIRCCVDAVNFVASSTRDQEATGEEVSDWVRMGKALDSICFWAALVLFLVGSSLIFLGAYFNRVPQLPYPPCM</sequence>
<reference key="1">
    <citation type="journal article" date="1985" name="Nature">
        <title>Cloning, sequencing and expression of cDNA for a novel subunit of acetylcholine receptor from calf muscle.</title>
        <authorList>
            <person name="Takai T."/>
            <person name="Noda M."/>
            <person name="Mishina M."/>
            <person name="Shimizu S."/>
            <person name="Furutani Y."/>
            <person name="Kayano T."/>
            <person name="Ikeda T."/>
            <person name="Kubo T."/>
            <person name="Takahashi H."/>
            <person name="Takahashi T."/>
            <person name="Kuno M."/>
            <person name="Numa S."/>
        </authorList>
    </citation>
    <scope>NUCLEOTIDE SEQUENCE [MRNA]</scope>
</reference>
<reference key="2">
    <citation type="journal article" date="2003" name="Ann. N. Y. Acad. Sci.">
        <title>Congenital myasthenic syndrome in cattle due to homozygosity for a truncating mutation in the acetylcholine receptor (AChR) epsilon-subunit gene.</title>
        <authorList>
            <person name="Sieb J.P."/>
            <person name="Kraner S."/>
            <person name="Thompson P.N."/>
            <person name="Steinlein O.K."/>
        </authorList>
    </citation>
    <scope>NUCLEOTIDE SEQUENCE [GENOMIC DNA]</scope>
</reference>
<reference key="3">
    <citation type="journal article" date="1986" name="Nature">
        <title>Molecular distinction between fetal and adult forms of muscle acetylcholine receptor.</title>
        <authorList>
            <person name="Mishina M."/>
            <person name="Takai T."/>
            <person name="Imoto K."/>
            <person name="Noda M."/>
            <person name="Takahashi T."/>
            <person name="Numa S."/>
            <person name="Methfessel C."/>
            <person name="Sakmann B."/>
        </authorList>
    </citation>
    <scope>FUNCTION</scope>
    <scope>TRANSPORTER ACTIVITY</scope>
    <scope>SUBUNIT</scope>
</reference>
<gene>
    <name type="primary">CHRNE</name>
</gene>
<proteinExistence type="evidence at protein level"/>
<comment type="function">
    <text evidence="3">After binding acetylcholine, the AChR responds by an extensive change in conformation that affects all subunits and leads to opening of an ion-conducting channel across the plasma membrane.</text>
</comment>
<comment type="catalytic activity">
    <reaction evidence="3">
        <text>K(+)(in) = K(+)(out)</text>
        <dbReference type="Rhea" id="RHEA:29463"/>
        <dbReference type="ChEBI" id="CHEBI:29103"/>
    </reaction>
</comment>
<comment type="catalytic activity">
    <reaction evidence="3">
        <text>Na(+)(in) = Na(+)(out)</text>
        <dbReference type="Rhea" id="RHEA:34963"/>
        <dbReference type="ChEBI" id="CHEBI:29101"/>
    </reaction>
</comment>
<comment type="subcellular location">
    <subcellularLocation>
        <location>Postsynaptic cell membrane</location>
        <topology>Multi-pass membrane protein</topology>
    </subcellularLocation>
    <subcellularLocation>
        <location>Cell membrane</location>
        <topology>Multi-pass membrane protein</topology>
    </subcellularLocation>
</comment>
<comment type="similarity">
    <text evidence="4">Belongs to the ligand-gated ion channel (TC 1.A.9) family. Acetylcholine receptor (TC 1.A.9.1) subfamily. Epsilon/CHRNE sub-subfamily.</text>
</comment>
<feature type="signal peptide">
    <location>
        <begin position="1"/>
        <end position="20"/>
    </location>
</feature>
<feature type="chain" id="PRO_0000000328" description="Acetylcholine receptor subunit epsilon">
    <location>
        <begin position="21"/>
        <end position="491"/>
    </location>
</feature>
<feature type="topological domain" description="Extracellular" evidence="2">
    <location>
        <begin position="21"/>
        <end position="239"/>
    </location>
</feature>
<feature type="transmembrane region" description="Helical" evidence="2">
    <location>
        <begin position="240"/>
        <end position="264"/>
    </location>
</feature>
<feature type="topological domain" description="Cytoplasmic" evidence="2">
    <location>
        <begin position="265"/>
        <end position="272"/>
    </location>
</feature>
<feature type="transmembrane region" description="Helical" evidence="2">
    <location>
        <begin position="273"/>
        <end position="291"/>
    </location>
</feature>
<feature type="topological domain" description="Extracellular" evidence="2">
    <location>
        <begin position="292"/>
        <end position="306"/>
    </location>
</feature>
<feature type="transmembrane region" description="Helical" evidence="2">
    <location>
        <begin position="307"/>
        <end position="328"/>
    </location>
</feature>
<feature type="topological domain" description="Cytoplasmic" evidence="2">
    <location>
        <begin position="329"/>
        <end position="456"/>
    </location>
</feature>
<feature type="transmembrane region" description="Helical" evidence="2">
    <location>
        <begin position="457"/>
        <end position="480"/>
    </location>
</feature>
<feature type="topological domain" description="Extracellular" evidence="2">
    <location>
        <begin position="481"/>
        <end position="491"/>
    </location>
</feature>
<feature type="glycosylation site" description="N-linked (GlcNAc...) asparagine" evidence="2">
    <location>
        <position position="86"/>
    </location>
</feature>
<feature type="glycosylation site" description="N-linked (GlcNAc...) asparagine" evidence="2">
    <location>
        <position position="161"/>
    </location>
</feature>
<feature type="disulfide bond" evidence="1">
    <location>
        <begin position="148"/>
        <end position="162"/>
    </location>
</feature>
<feature type="helix" evidence="5">
    <location>
        <begin position="24"/>
        <end position="32"/>
    </location>
</feature>
<feature type="strand" evidence="5">
    <location>
        <begin position="49"/>
        <end position="64"/>
    </location>
</feature>
<feature type="turn" evidence="5">
    <location>
        <begin position="65"/>
        <end position="68"/>
    </location>
</feature>
<feature type="strand" evidence="5">
    <location>
        <begin position="69"/>
        <end position="81"/>
    </location>
</feature>
<feature type="helix" evidence="5">
    <location>
        <begin position="83"/>
        <end position="85"/>
    </location>
</feature>
<feature type="helix" evidence="5">
    <location>
        <begin position="89"/>
        <end position="92"/>
    </location>
</feature>
<feature type="strand" evidence="5">
    <location>
        <begin position="98"/>
        <end position="101"/>
    </location>
</feature>
<feature type="helix" evidence="5">
    <location>
        <begin position="102"/>
        <end position="104"/>
    </location>
</feature>
<feature type="strand" evidence="5">
    <location>
        <begin position="110"/>
        <end position="112"/>
    </location>
</feature>
<feature type="strand" evidence="5">
    <location>
        <begin position="115"/>
        <end position="118"/>
    </location>
</feature>
<feature type="strand" evidence="5">
    <location>
        <begin position="127"/>
        <end position="130"/>
    </location>
</feature>
<feature type="strand" evidence="5">
    <location>
        <begin position="134"/>
        <end position="138"/>
    </location>
</feature>
<feature type="strand" evidence="5">
    <location>
        <begin position="141"/>
        <end position="147"/>
    </location>
</feature>
<feature type="turn" evidence="5">
    <location>
        <begin position="153"/>
        <end position="156"/>
    </location>
</feature>
<feature type="strand" evidence="5">
    <location>
        <begin position="159"/>
        <end position="170"/>
    </location>
</feature>
<feature type="turn" evidence="5">
    <location>
        <begin position="173"/>
        <end position="175"/>
    </location>
</feature>
<feature type="strand" evidence="5">
    <location>
        <begin position="176"/>
        <end position="180"/>
    </location>
</feature>
<feature type="turn" evidence="5">
    <location>
        <begin position="196"/>
        <end position="198"/>
    </location>
</feature>
<feature type="strand" evidence="5">
    <location>
        <begin position="203"/>
        <end position="209"/>
    </location>
</feature>
<feature type="strand" evidence="5">
    <location>
        <begin position="211"/>
        <end position="217"/>
    </location>
</feature>
<feature type="strand" evidence="5">
    <location>
        <begin position="227"/>
        <end position="238"/>
    </location>
</feature>
<feature type="helix" evidence="5">
    <location>
        <begin position="241"/>
        <end position="246"/>
    </location>
</feature>
<feature type="helix" evidence="5">
    <location>
        <begin position="248"/>
        <end position="256"/>
    </location>
</feature>
<feature type="helix" evidence="5">
    <location>
        <begin position="257"/>
        <end position="262"/>
    </location>
</feature>
<feature type="helix" evidence="5">
    <location>
        <begin position="272"/>
        <end position="291"/>
    </location>
</feature>
<feature type="helix" evidence="5">
    <location>
        <begin position="303"/>
        <end position="329"/>
    </location>
</feature>
<feature type="turn" evidence="5">
    <location>
        <begin position="333"/>
        <end position="335"/>
    </location>
</feature>
<feature type="helix" evidence="5">
    <location>
        <begin position="340"/>
        <end position="352"/>
    </location>
</feature>
<feature type="helix" evidence="5">
    <location>
        <begin position="418"/>
        <end position="478"/>
    </location>
</feature>